<name>AB10A_ARATH</name>
<gene>
    <name type="primary">ABCA10</name>
    <name type="synonym">ATH14</name>
    <name type="ordered locus">At5g61740</name>
    <name type="ORF">MAC9.5</name>
</gene>
<dbReference type="EMBL" id="AB010069">
    <property type="protein sequence ID" value="BAB10074.1"/>
    <property type="status" value="ALT_SEQ"/>
    <property type="molecule type" value="Genomic_DNA"/>
</dbReference>
<dbReference type="EMBL" id="CP002688">
    <property type="protein sequence ID" value="AED97511.2"/>
    <property type="molecule type" value="Genomic_DNA"/>
</dbReference>
<dbReference type="RefSeq" id="NP_001318860.1">
    <property type="nucleotide sequence ID" value="NM_001345494.1"/>
</dbReference>
<dbReference type="SMR" id="Q9FLT4"/>
<dbReference type="BioGRID" id="21540">
    <property type="interactions" value="1"/>
</dbReference>
<dbReference type="FunCoup" id="Q9FLT4">
    <property type="interactions" value="7"/>
</dbReference>
<dbReference type="STRING" id="3702.Q9FLT4"/>
<dbReference type="iPTMnet" id="Q9FLT4"/>
<dbReference type="PaxDb" id="3702-AT5G61740.1"/>
<dbReference type="ProteomicsDB" id="244595"/>
<dbReference type="EnsemblPlants" id="AT5G61740.1">
    <property type="protein sequence ID" value="AT5G61740.1"/>
    <property type="gene ID" value="AT5G61740"/>
</dbReference>
<dbReference type="GeneID" id="836296"/>
<dbReference type="Gramene" id="AT5G61740.1">
    <property type="protein sequence ID" value="AT5G61740.1"/>
    <property type="gene ID" value="AT5G61740"/>
</dbReference>
<dbReference type="KEGG" id="ath:AT5G61740"/>
<dbReference type="Araport" id="AT5G61740"/>
<dbReference type="TAIR" id="AT5G61740">
    <property type="gene designation" value="ABCA10"/>
</dbReference>
<dbReference type="eggNOG" id="KOG0059">
    <property type="taxonomic scope" value="Eukaryota"/>
</dbReference>
<dbReference type="InParanoid" id="Q9FLT4"/>
<dbReference type="PhylomeDB" id="Q9FLT4"/>
<dbReference type="BioCyc" id="ARA:AT5G61740-MONOMER"/>
<dbReference type="PRO" id="PR:Q9FLT4"/>
<dbReference type="Proteomes" id="UP000006548">
    <property type="component" value="Chromosome 5"/>
</dbReference>
<dbReference type="ExpressionAtlas" id="Q9FLT4">
    <property type="expression patterns" value="baseline and differential"/>
</dbReference>
<dbReference type="GO" id="GO:0016020">
    <property type="term" value="C:membrane"/>
    <property type="evidence" value="ECO:0007669"/>
    <property type="project" value="UniProtKB-SubCell"/>
</dbReference>
<dbReference type="GO" id="GO:0140359">
    <property type="term" value="F:ABC-type transporter activity"/>
    <property type="evidence" value="ECO:0007669"/>
    <property type="project" value="InterPro"/>
</dbReference>
<dbReference type="GO" id="GO:0005524">
    <property type="term" value="F:ATP binding"/>
    <property type="evidence" value="ECO:0007669"/>
    <property type="project" value="UniProtKB-KW"/>
</dbReference>
<dbReference type="GO" id="GO:0016887">
    <property type="term" value="F:ATP hydrolysis activity"/>
    <property type="evidence" value="ECO:0007669"/>
    <property type="project" value="InterPro"/>
</dbReference>
<dbReference type="CDD" id="cd03263">
    <property type="entry name" value="ABC_subfamily_A"/>
    <property type="match status" value="1"/>
</dbReference>
<dbReference type="FunFam" id="3.40.50.300:FF:000633">
    <property type="entry name" value="ABC transporter A family member 7"/>
    <property type="match status" value="1"/>
</dbReference>
<dbReference type="Gene3D" id="3.40.50.300">
    <property type="entry name" value="P-loop containing nucleotide triphosphate hydrolases"/>
    <property type="match status" value="1"/>
</dbReference>
<dbReference type="InterPro" id="IPR003593">
    <property type="entry name" value="AAA+_ATPase"/>
</dbReference>
<dbReference type="InterPro" id="IPR013525">
    <property type="entry name" value="ABC2_TM"/>
</dbReference>
<dbReference type="InterPro" id="IPR003439">
    <property type="entry name" value="ABC_transporter-like_ATP-bd"/>
</dbReference>
<dbReference type="InterPro" id="IPR017871">
    <property type="entry name" value="ABC_transporter-like_CS"/>
</dbReference>
<dbReference type="InterPro" id="IPR026082">
    <property type="entry name" value="ABCA"/>
</dbReference>
<dbReference type="InterPro" id="IPR027417">
    <property type="entry name" value="P-loop_NTPase"/>
</dbReference>
<dbReference type="PANTHER" id="PTHR19229:SF237">
    <property type="entry name" value="ABC TRANSPORTER A FAMILY MEMBER 10"/>
    <property type="match status" value="1"/>
</dbReference>
<dbReference type="PANTHER" id="PTHR19229">
    <property type="entry name" value="ATP-BINDING CASSETTE TRANSPORTER SUBFAMILY A ABCA"/>
    <property type="match status" value="1"/>
</dbReference>
<dbReference type="Pfam" id="PF12698">
    <property type="entry name" value="ABC2_membrane_3"/>
    <property type="match status" value="1"/>
</dbReference>
<dbReference type="Pfam" id="PF00005">
    <property type="entry name" value="ABC_tran"/>
    <property type="match status" value="1"/>
</dbReference>
<dbReference type="Pfam" id="PF24526">
    <property type="entry name" value="ABCA12_C"/>
    <property type="match status" value="1"/>
</dbReference>
<dbReference type="SMART" id="SM00382">
    <property type="entry name" value="AAA"/>
    <property type="match status" value="1"/>
</dbReference>
<dbReference type="SUPFAM" id="SSF52540">
    <property type="entry name" value="P-loop containing nucleoside triphosphate hydrolases"/>
    <property type="match status" value="1"/>
</dbReference>
<dbReference type="PROSITE" id="PS00211">
    <property type="entry name" value="ABC_TRANSPORTER_1"/>
    <property type="match status" value="1"/>
</dbReference>
<dbReference type="PROSITE" id="PS50893">
    <property type="entry name" value="ABC_TRANSPORTER_2"/>
    <property type="match status" value="1"/>
</dbReference>
<protein>
    <recommendedName>
        <fullName>ABC transporter A family member 10</fullName>
        <shortName>ABC transporter ABCA.10</shortName>
        <shortName>AtABCA10</shortName>
    </recommendedName>
    <alternativeName>
        <fullName>ABC2 homolog 14</fullName>
    </alternativeName>
</protein>
<comment type="subcellular location">
    <subcellularLocation>
        <location evidence="3">Membrane</location>
        <topology evidence="3">Multi-pass membrane protein</topology>
    </subcellularLocation>
</comment>
<comment type="similarity">
    <text evidence="3">Belongs to the ABC transporter superfamily. ABCA family. CPR flippase (TC 3.A.1.211) subfamily.</text>
</comment>
<comment type="sequence caution" evidence="3">
    <conflict type="erroneous gene model prediction">
        <sequence resource="EMBL-CDS" id="BAB10074"/>
    </conflict>
</comment>
<keyword id="KW-0067">ATP-binding</keyword>
<keyword id="KW-0472">Membrane</keyword>
<keyword id="KW-0547">Nucleotide-binding</keyword>
<keyword id="KW-0597">Phosphoprotein</keyword>
<keyword id="KW-1185">Reference proteome</keyword>
<keyword id="KW-0812">Transmembrane</keyword>
<keyword id="KW-1133">Transmembrane helix</keyword>
<keyword id="KW-0813">Transport</keyword>
<reference key="1">
    <citation type="journal article" date="1998" name="DNA Res.">
        <title>Structural analysis of Arabidopsis thaliana chromosome 5. IV. Sequence features of the regions of 1,456,315 bp covered by nineteen physically assigned P1 and TAC clones.</title>
        <authorList>
            <person name="Sato S."/>
            <person name="Kaneko T."/>
            <person name="Kotani H."/>
            <person name="Nakamura Y."/>
            <person name="Asamizu E."/>
            <person name="Miyajima N."/>
            <person name="Tabata S."/>
        </authorList>
    </citation>
    <scope>NUCLEOTIDE SEQUENCE [LARGE SCALE GENOMIC DNA]</scope>
    <source>
        <strain>cv. Columbia</strain>
    </source>
</reference>
<reference key="2">
    <citation type="journal article" date="2017" name="Plant J.">
        <title>Araport11: a complete reannotation of the Arabidopsis thaliana reference genome.</title>
        <authorList>
            <person name="Cheng C.Y."/>
            <person name="Krishnakumar V."/>
            <person name="Chan A.P."/>
            <person name="Thibaud-Nissen F."/>
            <person name="Schobel S."/>
            <person name="Town C.D."/>
        </authorList>
    </citation>
    <scope>GENOME REANNOTATION</scope>
    <source>
        <strain>cv. Columbia</strain>
    </source>
</reference>
<reference key="3">
    <citation type="journal article" date="2001" name="J. Biol. Chem.">
        <title>The Arabidopsis thaliana ABC protein superfamily, a complete inventory.</title>
        <authorList>
            <person name="Sanchez-Fernandez R."/>
            <person name="Davies T.G."/>
            <person name="Coleman J.O."/>
            <person name="Rea P.A."/>
        </authorList>
    </citation>
    <scope>GENE FAMILY</scope>
    <scope>NOMENCLATURE</scope>
</reference>
<reference key="4">
    <citation type="journal article" date="2004" name="Plant Cell">
        <title>Phosphoproteomics of the Arabidopsis plasma membrane and a new phosphorylation site database.</title>
        <authorList>
            <person name="Nuehse T.S."/>
            <person name="Stensballe A."/>
            <person name="Jensen O.N."/>
            <person name="Peck S.C."/>
        </authorList>
    </citation>
    <scope>PHOSPHORYLATION [LARGE SCALE ANALYSIS] AT SER-555</scope>
    <scope>IDENTIFICATION BY MASS SPECTROMETRY [LARGE SCALE ANALYSIS]</scope>
</reference>
<reference key="5">
    <citation type="journal article" date="2008" name="Trends Plant Sci.">
        <title>Plant ABC proteins - a unified nomenclature and updated inventory.</title>
        <authorList>
            <person name="Verrier P.J."/>
            <person name="Bird D."/>
            <person name="Burla B."/>
            <person name="Dassa E."/>
            <person name="Forestier C."/>
            <person name="Geisler M."/>
            <person name="Klein M."/>
            <person name="Kolukisaoglu H.U."/>
            <person name="Lee Y."/>
            <person name="Martinoia E."/>
            <person name="Murphy A."/>
            <person name="Rea P.A."/>
            <person name="Samuels L."/>
            <person name="Schulz B."/>
            <person name="Spalding E.J."/>
            <person name="Yazaki K."/>
            <person name="Theodoulou F.L."/>
        </authorList>
    </citation>
    <scope>GENE FAMILY</scope>
    <scope>NOMENCLATURE</scope>
</reference>
<organism>
    <name type="scientific">Arabidopsis thaliana</name>
    <name type="common">Mouse-ear cress</name>
    <dbReference type="NCBI Taxonomy" id="3702"/>
    <lineage>
        <taxon>Eukaryota</taxon>
        <taxon>Viridiplantae</taxon>
        <taxon>Streptophyta</taxon>
        <taxon>Embryophyta</taxon>
        <taxon>Tracheophyta</taxon>
        <taxon>Spermatophyta</taxon>
        <taxon>Magnoliopsida</taxon>
        <taxon>eudicotyledons</taxon>
        <taxon>Gunneridae</taxon>
        <taxon>Pentapetalae</taxon>
        <taxon>rosids</taxon>
        <taxon>malvids</taxon>
        <taxon>Brassicales</taxon>
        <taxon>Brassicaceae</taxon>
        <taxon>Camelineae</taxon>
        <taxon>Arabidopsis</taxon>
    </lineage>
</organism>
<sequence>MADPSQASFWAQANALLRKNLTYQRRHIWTNIRLVLVPLLLCLFLLGIQLLLDVVVNKAADLTKCGSQDDFSIGDCPIPNPPLLPPLLQIPEPESRAVSGGFFSYNDLPDKSCRKTGTCPVTILLTGNNHSLGQALSGNMFGGSFAVNSSDLLSSLAYNVLGSTLALGTNNYADPGIESDFPIYSIQSQCSPNSTWPLSFGKIHTAVTCLQGLSLWRNNSVEVNDELFKGNWKGNPERMTNEIAAAYDLLNTDRNNFDVTIWYNSTNIDDPSRAPLVRVPRLLNLVSNAYLKFLKGPGTRILFEFVKEVPKHQTKFNLDIASMLGPLFFTWVVLLLFPVILTSLVYEKQERLRIIMKMHGLGIGPYWMISYAYFLTLSMFYVISLVIFGSAIGLRYFRLNDYSVQFIFYFIFVNLQISFAFLASSIFSKVKTATVVAYTLVFASGLLGMFLFGELLESPTFPEKGILALELYPGFSLFRGLYEFAQYASRGNGMKWKDLKESGMDKLFYLMSVEWFVILIVAYSIDLLSSSGRSPFVFFKKSSSLPSPSVQRQNSENVLIDMEKTDVTQEREKVEKLRKEGTTGHAIVCDNLKKVYPGSDGNPPKLAVRGLYLDVPSGECFGMLGPNGAGKTSFINMMTGLLKPTSGTALVQGLDICKDMNKVYTSMGVCPQHDLLWGTLTGREHLLFYGRLKNIKGSALMQAVEESLKSVSLFDGGVADKPAGKYSGGMKRRLSVAISLIGNPKVVYMDEPSTGLDPASRKDLWTVIQRAKQNTAIILTTHSMEEAEFLCDRLGIFVDGGLQCVGNPKELKGRYGGSYVFTMTTSVEHEEKVERMVKHISPNSKRVYHLAGTQKFEIPKQEVMIADVFFMVEKVKSKFTVFAWGLADTTLEDVFFKVATTAQAFNSLS</sequence>
<feature type="chain" id="PRO_0000240332" description="ABC transporter A family member 10">
    <location>
        <begin position="1"/>
        <end position="909"/>
    </location>
</feature>
<feature type="transmembrane region" description="Helical" evidence="1">
    <location>
        <begin position="35"/>
        <end position="55"/>
    </location>
</feature>
<feature type="transmembrane region" description="Helical" evidence="1">
    <location>
        <begin position="320"/>
        <end position="340"/>
    </location>
</feature>
<feature type="transmembrane region" description="Helical" evidence="1">
    <location>
        <begin position="374"/>
        <end position="394"/>
    </location>
</feature>
<feature type="transmembrane region" description="Helical" evidence="1">
    <location>
        <begin position="406"/>
        <end position="426"/>
    </location>
</feature>
<feature type="transmembrane region" description="Helical" evidence="1">
    <location>
        <begin position="433"/>
        <end position="453"/>
    </location>
</feature>
<feature type="transmembrane region" description="Helical" evidence="1">
    <location>
        <begin position="465"/>
        <end position="485"/>
    </location>
</feature>
<feature type="transmembrane region" description="Helical" evidence="1">
    <location>
        <begin position="507"/>
        <end position="527"/>
    </location>
</feature>
<feature type="domain" description="ABC transporter" evidence="2">
    <location>
        <begin position="587"/>
        <end position="824"/>
    </location>
</feature>
<feature type="binding site" evidence="2">
    <location>
        <begin position="625"/>
        <end position="632"/>
    </location>
    <ligand>
        <name>ATP</name>
        <dbReference type="ChEBI" id="CHEBI:30616"/>
    </ligand>
</feature>
<feature type="modified residue" description="Phosphoserine" evidence="4">
    <location>
        <position position="555"/>
    </location>
</feature>
<evidence type="ECO:0000255" key="1"/>
<evidence type="ECO:0000255" key="2">
    <source>
        <dbReference type="PROSITE-ProRule" id="PRU00434"/>
    </source>
</evidence>
<evidence type="ECO:0000305" key="3"/>
<evidence type="ECO:0007744" key="4">
    <source>
    </source>
</evidence>
<proteinExistence type="evidence at protein level"/>
<accession>Q9FLT4</accession>
<accession>F4K3L8</accession>